<feature type="signal peptide" evidence="1">
    <location>
        <begin position="1"/>
        <end position="19"/>
    </location>
</feature>
<feature type="chain" id="PRO_0000065348" description="Uncharacterized protein F46C5.2">
    <location>
        <begin position="20"/>
        <end position="202"/>
    </location>
</feature>
<feature type="transmembrane region" description="Helical" evidence="1">
    <location>
        <begin position="177"/>
        <end position="199"/>
    </location>
</feature>
<evidence type="ECO:0000255" key="1"/>
<evidence type="ECO:0000305" key="2"/>
<proteinExistence type="inferred from homology"/>
<protein>
    <recommendedName>
        <fullName>Uncharacterized protein F46C5.2</fullName>
    </recommendedName>
</protein>
<comment type="subcellular location">
    <subcellularLocation>
        <location evidence="2">Membrane</location>
        <topology evidence="2">Single-pass membrane protein</topology>
    </subcellularLocation>
</comment>
<dbReference type="EMBL" id="Z54281">
    <property type="protein sequence ID" value="CAA91050.2"/>
    <property type="molecule type" value="Genomic_DNA"/>
</dbReference>
<dbReference type="PIR" id="T22305">
    <property type="entry name" value="T22305"/>
</dbReference>
<dbReference type="RefSeq" id="NP_495881.2">
    <property type="nucleotide sequence ID" value="NM_063480.8"/>
</dbReference>
<dbReference type="FunCoup" id="P52881">
    <property type="interactions" value="217"/>
</dbReference>
<dbReference type="STRING" id="6239.F46C5.2.1"/>
<dbReference type="PaxDb" id="6239-F46C5.2.2"/>
<dbReference type="EnsemblMetazoa" id="F46C5.2.1">
    <property type="protein sequence ID" value="F46C5.2.1"/>
    <property type="gene ID" value="WBGene00009779"/>
</dbReference>
<dbReference type="EnsemblMetazoa" id="F46C5.2.2">
    <property type="protein sequence ID" value="F46C5.2.2"/>
    <property type="gene ID" value="WBGene00009779"/>
</dbReference>
<dbReference type="GeneID" id="185844"/>
<dbReference type="KEGG" id="cel:CELE_F46C5.2"/>
<dbReference type="UCSC" id="F46C5.2.1">
    <property type="organism name" value="c. elegans"/>
</dbReference>
<dbReference type="AGR" id="WB:WBGene00009779"/>
<dbReference type="CTD" id="185844"/>
<dbReference type="WormBase" id="F46C5.2">
    <property type="protein sequence ID" value="CE41242"/>
    <property type="gene ID" value="WBGene00009779"/>
</dbReference>
<dbReference type="eggNOG" id="ENOG502SPIT">
    <property type="taxonomic scope" value="Eukaryota"/>
</dbReference>
<dbReference type="HOGENOM" id="CLU_115552_0_0_1"/>
<dbReference type="InParanoid" id="P52881"/>
<dbReference type="OMA" id="TPWQLAD"/>
<dbReference type="OrthoDB" id="5781490at2759"/>
<dbReference type="PRO" id="PR:P52881"/>
<dbReference type="Proteomes" id="UP000001940">
    <property type="component" value="Chromosome II"/>
</dbReference>
<dbReference type="Bgee" id="WBGene00009779">
    <property type="expression patterns" value="Expressed in pharyngeal muscle cell (C elegans) and 3 other cell types or tissues"/>
</dbReference>
<dbReference type="GO" id="GO:0016020">
    <property type="term" value="C:membrane"/>
    <property type="evidence" value="ECO:0007669"/>
    <property type="project" value="UniProtKB-SubCell"/>
</dbReference>
<reference key="1">
    <citation type="journal article" date="1998" name="Science">
        <title>Genome sequence of the nematode C. elegans: a platform for investigating biology.</title>
        <authorList>
            <consortium name="The C. elegans sequencing consortium"/>
        </authorList>
    </citation>
    <scope>NUCLEOTIDE SEQUENCE [LARGE SCALE GENOMIC DNA]</scope>
    <source>
        <strain>Bristol N2</strain>
    </source>
</reference>
<sequence length="202" mass="22851">MRRKNGFSVASVFILCSIAQMTCEEFELENTESLVECVQCVQLWRSASAKEGKVCTSGATTCKGNACFMRQCKHCPVYQYMSGCVNFSPWQLADLEMNRRTSELRMRRVGAVLLCEDTFNQTTCVCNRRDKCNDIHSRLPFATYAEGLFRGVVNFDTIIAAIDPRYLEVMSGYHFRFLASSSSSFSSFLPSIAIILFFVLSH</sequence>
<organism>
    <name type="scientific">Caenorhabditis elegans</name>
    <dbReference type="NCBI Taxonomy" id="6239"/>
    <lineage>
        <taxon>Eukaryota</taxon>
        <taxon>Metazoa</taxon>
        <taxon>Ecdysozoa</taxon>
        <taxon>Nematoda</taxon>
        <taxon>Chromadorea</taxon>
        <taxon>Rhabditida</taxon>
        <taxon>Rhabditina</taxon>
        <taxon>Rhabditomorpha</taxon>
        <taxon>Rhabditoidea</taxon>
        <taxon>Rhabditidae</taxon>
        <taxon>Peloderinae</taxon>
        <taxon>Caenorhabditis</taxon>
    </lineage>
</organism>
<name>YAF2_CAEEL</name>
<keyword id="KW-0472">Membrane</keyword>
<keyword id="KW-1185">Reference proteome</keyword>
<keyword id="KW-0732">Signal</keyword>
<keyword id="KW-0812">Transmembrane</keyword>
<keyword id="KW-1133">Transmembrane helix</keyword>
<accession>P52881</accession>
<gene>
    <name type="ORF">F46C5.2</name>
</gene>